<reference evidence="7" key="1">
    <citation type="journal article" date="2016" name="Genetics">
        <title>Host Mitochondrial Association Evolved in the Human Parasite Toxoplasma gondii via Neofunctionalization of a Gene Duplicate.</title>
        <authorList>
            <person name="Adomako-Ankomah Y."/>
            <person name="English E.D."/>
            <person name="Danielson J.J."/>
            <person name="Pernas L.F."/>
            <person name="Parker M.L."/>
            <person name="Boulanger M.J."/>
            <person name="Dubey J.P."/>
            <person name="Boyle J.P."/>
        </authorList>
    </citation>
    <scope>NUCLEOTIDE SEQUENCE [GENOMIC DNA]</scope>
    <scope>NOMENCLATURE</scope>
    <scope>FUNCTION</scope>
    <scope>POLYMORPHISM</scope>
    <source>
        <strain evidence="7">RH</strain>
    </source>
</reference>
<reference key="2">
    <citation type="submission" date="2020-03" db="EMBL/GenBank/DDBJ databases">
        <title>Genome sequence of Toxoplasma gondii RH-88 strain.</title>
        <authorList>
            <person name="Lorenzi H.A."/>
            <person name="Venepally P."/>
            <person name="Rozenberg A."/>
            <person name="Sibley D."/>
        </authorList>
    </citation>
    <scope>NUCLEOTIDE SEQUENCE [LARGE SCALE GENOMIC DNA]</scope>
    <source>
        <strain>RH-88</strain>
    </source>
</reference>
<proteinExistence type="inferred from homology"/>
<dbReference type="EMBL" id="KU761333">
    <property type="protein sequence ID" value="AMN92246.1"/>
    <property type="molecule type" value="Genomic_DNA"/>
</dbReference>
<dbReference type="EMBL" id="JAAUHK010000187">
    <property type="protein sequence ID" value="KAF4645528.1"/>
    <property type="molecule type" value="Genomic_DNA"/>
</dbReference>
<dbReference type="SMR" id="A0A140H545"/>
<dbReference type="VEuPathDB" id="ToxoDB:TGARI_220950"/>
<dbReference type="VEuPathDB" id="ToxoDB:TGCAST_387150"/>
<dbReference type="VEuPathDB" id="ToxoDB:TGCAST_390500"/>
<dbReference type="VEuPathDB" id="ToxoDB:TGCOUG_394540"/>
<dbReference type="VEuPathDB" id="ToxoDB:TGCOUG_394550"/>
<dbReference type="VEuPathDB" id="ToxoDB:TGDOM2_323100"/>
<dbReference type="VEuPathDB" id="ToxoDB:TGDOM2_401920"/>
<dbReference type="VEuPathDB" id="ToxoDB:TGFOU_407650"/>
<dbReference type="VEuPathDB" id="ToxoDB:TGGT1_220950"/>
<dbReference type="VEuPathDB" id="ToxoDB:TGGT1_279100"/>
<dbReference type="VEuPathDB" id="ToxoDB:TGMAS_361110"/>
<dbReference type="VEuPathDB" id="ToxoDB:TGME49_220950"/>
<dbReference type="VEuPathDB" id="ToxoDB:TGP89_422200"/>
<dbReference type="VEuPathDB" id="ToxoDB:TGPRC2_279100B"/>
<dbReference type="VEuPathDB" id="ToxoDB:TGRH88_000150"/>
<dbReference type="VEuPathDB" id="ToxoDB:TGRUB_433890"/>
<dbReference type="VEuPathDB" id="ToxoDB:TGVAND_437510"/>
<dbReference type="VEuPathDB" id="ToxoDB:TGVAND_437520"/>
<dbReference type="VEuPathDB" id="ToxoDB:TGVAND_439210"/>
<dbReference type="VEuPathDB" id="ToxoDB:TGVEG_279100"/>
<dbReference type="Proteomes" id="UP000557509">
    <property type="component" value="Unassembled WGS sequence"/>
</dbReference>
<dbReference type="GO" id="GO:0016020">
    <property type="term" value="C:membrane"/>
    <property type="evidence" value="ECO:0007669"/>
    <property type="project" value="UniProtKB-KW"/>
</dbReference>
<dbReference type="GO" id="GO:0020005">
    <property type="term" value="C:symbiont-containing vacuole membrane"/>
    <property type="evidence" value="ECO:0007669"/>
    <property type="project" value="UniProtKB-SubCell"/>
</dbReference>
<dbReference type="CDD" id="cd21101">
    <property type="entry name" value="MAF1-ALBA4_C"/>
    <property type="match status" value="1"/>
</dbReference>
<sequence length="435" mass="46978">MWRIWRCRLSFLFVTGCLLGALTAGLGSQMSDSVGRNVQAPAGVADASQEAGDVVEERTERTEEQVFAPGPPRRHSSESLFPRNPSVTARRRRNRRITLIATAVGVAVILAALYVLRRRRAQPPQEPEPPTRLRTPRPRAPSGQQQPSESEPPAGVPMKPGSLTLPFTCLGDTKVTFFGPSGRQHGFTPLYDPSPSKRVATVDAGANALFIGGGGLNGQFAKTLLEEAEKNGIRLTSVALSEHSQRIQQSLLRRAVKSPGKLVELDTGVASPVFARSFGFVPVVPGLMWKESKVGANVGVTFIHILKPEVTPYGNLNNNVMMYTVAPCGAPPDTTYSLAYKTTIAGVIRAAAAYNDTPAGQQYPVQGLRLPLLRGGIFRRNRSLESIGRANAEGTSLAITQYGPNFELQYMYDPSNAALHGLQEAESTYLASMLD</sequence>
<protein>
    <recommendedName>
        <fullName evidence="5">Mitochondrial association factor 1 form b0</fullName>
        <shortName evidence="5">MAF1RHb0 allele</shortName>
    </recommendedName>
</protein>
<feature type="signal peptide" evidence="2">
    <location>
        <begin position="1"/>
        <end position="27"/>
    </location>
</feature>
<feature type="chain" id="PRO_5029112464" description="Mitochondrial association factor 1 form b0" evidence="2">
    <location>
        <begin position="28"/>
        <end position="435"/>
    </location>
</feature>
<feature type="topological domain" description="Vacuolar" evidence="6">
    <location>
        <begin position="28"/>
        <end position="96"/>
    </location>
</feature>
<feature type="transmembrane region" description="Helical" evidence="2">
    <location>
        <begin position="97"/>
        <end position="117"/>
    </location>
</feature>
<feature type="topological domain" description="Cytoplasmic" evidence="6">
    <location>
        <begin position="118"/>
        <end position="435"/>
    </location>
</feature>
<feature type="region of interest" description="Disordered" evidence="3">
    <location>
        <begin position="43"/>
        <end position="89"/>
    </location>
</feature>
<feature type="region of interest" description="Disordered" evidence="3">
    <location>
        <begin position="120"/>
        <end position="162"/>
    </location>
</feature>
<feature type="compositionally biased region" description="Basic and acidic residues" evidence="3">
    <location>
        <begin position="55"/>
        <end position="64"/>
    </location>
</feature>
<accession>A0A140H545</accession>
<name>MAFB0_TOXGO</name>
<organism evidence="7">
    <name type="scientific">Toxoplasma gondii</name>
    <dbReference type="NCBI Taxonomy" id="5811"/>
    <lineage>
        <taxon>Eukaryota</taxon>
        <taxon>Sar</taxon>
        <taxon>Alveolata</taxon>
        <taxon>Apicomplexa</taxon>
        <taxon>Conoidasida</taxon>
        <taxon>Coccidia</taxon>
        <taxon>Eucoccidiorida</taxon>
        <taxon>Eimeriorina</taxon>
        <taxon>Sarcocystidae</taxon>
        <taxon>Toxoplasma</taxon>
    </lineage>
</organism>
<evidence type="ECO:0000250" key="1">
    <source>
        <dbReference type="UniProtKB" id="A0A140H546"/>
    </source>
</evidence>
<evidence type="ECO:0000255" key="2"/>
<evidence type="ECO:0000256" key="3">
    <source>
        <dbReference type="SAM" id="MobiDB-lite"/>
    </source>
</evidence>
<evidence type="ECO:0000269" key="4">
    <source>
    </source>
</evidence>
<evidence type="ECO:0000303" key="5">
    <source>
    </source>
</evidence>
<evidence type="ECO:0000305" key="6"/>
<evidence type="ECO:0000312" key="7">
    <source>
        <dbReference type="EMBL" id="AMN92246.1"/>
    </source>
</evidence>
<evidence type="ECO:0000312" key="8">
    <source>
        <dbReference type="EMBL" id="KAF4645528.1"/>
    </source>
</evidence>
<gene>
    <name evidence="5" type="primary">MAF1b0</name>
    <name evidence="5" type="synonym">MAF1</name>
    <name evidence="8" type="ORF">TGRH88_000150</name>
</gene>
<comment type="function">
    <text evidence="4">During host cell infection by tachyzoites, does not play a role in tethering the parasitophorous vacuole to the host mitochondria.</text>
</comment>
<comment type="subcellular location">
    <subcellularLocation>
        <location evidence="1">Parasitophorous vacuole membrane</location>
        <topology evidence="1">Single-pass type I membrane protein</topology>
    </subcellularLocation>
</comment>
<comment type="polymorphism">
    <text evidence="4">The MAF1 locus encodes multiple tandemly duplicated paralogs that vary in expression, sequence and copy number across T.gondii strains (PubMed:26920761). For instance, type I strain GT1 has 6 copies, type I strain RH has 4 copies, type II strains ME49 and PRU have 4 copies, type III strain VEG has 4 copies and type III strain CTG has only 2 copies (PubMed:26920761). The paralogs are classified into two groups, a and b and have probably arisen from the neofunctionalization of an ancestral MAF1 a gene (PubMed:26920761). They are characterized by the presence or absence of a repetitive stretch of 4 to 7 prolines followed by a serine (P(4:7)S), as well as differences in the amino acids surrounding the proline motif (PubMed:26920761). This motif is either completely missing (a and b0 paralogs) or repeated up to six times (b paralogs) (PubMed:26920761). cross the strains, transcript levels for the a paralogs are similar, however, in type II strain ME49, transcript levels for the b paralogs are low and no paralog MAF1 b1 protein is produced (PubMed:26920761). Paralogs differ in their ability to mediate host mitochondrial association (HMA), but also in their ability to confer a selective advantage during infection in a mouse model (PubMed:26920761). Tachyzoites from type I and III strains associate with host mitochondria (HMA(+)), while tachyzoites from type II strains, such as ME49, do not associate with host mitochondria (HMA(-)) due to a lack of MAF1 b1 expression (PubMed:26920761).</text>
</comment>
<keyword id="KW-0472">Membrane</keyword>
<keyword id="KW-1185">Reference proteome</keyword>
<keyword id="KW-0732">Signal</keyword>
<keyword id="KW-1137">Tachyzoite</keyword>
<keyword id="KW-0812">Transmembrane</keyword>
<keyword id="KW-1133">Transmembrane helix</keyword>